<protein>
    <recommendedName>
        <fullName>Tryptophan synthase alpha chain</fullName>
        <ecNumber>4.2.1.20</ecNumber>
    </recommendedName>
</protein>
<sequence>MSKLTQVFKQTKLCIGYLTAGDGGTSYTIEAAKALIQGGVDILELGFPFSDPVADNPEIQVSHDRALAENLTSETLLEIVEGIRAFNQEVPLILYSYYNPLLQRDLDYLRRLKDAGINGVCVIDLPAPLSHGEKSPFFEDLLAVGLDPILLISAGTTPERMSLIQEYARGFLYYIPCQATRDSEVGIKEEFRKVREHFDLPIVDRRDICDKKEAAHVLNYSDGFIVKTAFVHQTTMDSSVETLTALAQTVIPG</sequence>
<proteinExistence type="evidence at protein level"/>
<name>TRPA_CHLTR</name>
<dbReference type="EC" id="4.2.1.20"/>
<dbReference type="EMBL" id="AE001273">
    <property type="protein sequence ID" value="AAC67762.1"/>
    <property type="molecule type" value="Genomic_DNA"/>
</dbReference>
<dbReference type="PIR" id="B71547">
    <property type="entry name" value="B71547"/>
</dbReference>
<dbReference type="RefSeq" id="NP_219674.1">
    <property type="nucleotide sequence ID" value="NC_000117.1"/>
</dbReference>
<dbReference type="RefSeq" id="WP_010725110.1">
    <property type="nucleotide sequence ID" value="NC_000117.1"/>
</dbReference>
<dbReference type="PDB" id="6V82">
    <property type="method" value="X-ray"/>
    <property type="resolution" value="2.42 A"/>
    <property type="chains" value="A=1-253"/>
</dbReference>
<dbReference type="PDBsum" id="6V82"/>
<dbReference type="SMR" id="O84173"/>
<dbReference type="FunCoup" id="O84173">
    <property type="interactions" value="169"/>
</dbReference>
<dbReference type="STRING" id="272561.CT_171"/>
<dbReference type="EnsemblBacteria" id="AAC67762">
    <property type="protein sequence ID" value="AAC67762"/>
    <property type="gene ID" value="CT_171"/>
</dbReference>
<dbReference type="GeneID" id="884962"/>
<dbReference type="KEGG" id="ctr:CT_171"/>
<dbReference type="PATRIC" id="fig|272561.5.peg.184"/>
<dbReference type="HOGENOM" id="CLU_016734_0_0_0"/>
<dbReference type="InParanoid" id="O84173"/>
<dbReference type="OrthoDB" id="9804578at2"/>
<dbReference type="UniPathway" id="UPA00035">
    <property type="reaction ID" value="UER00044"/>
</dbReference>
<dbReference type="Proteomes" id="UP000000431">
    <property type="component" value="Chromosome"/>
</dbReference>
<dbReference type="GO" id="GO:0005829">
    <property type="term" value="C:cytosol"/>
    <property type="evidence" value="ECO:0000318"/>
    <property type="project" value="GO_Central"/>
</dbReference>
<dbReference type="GO" id="GO:0004834">
    <property type="term" value="F:tryptophan synthase activity"/>
    <property type="evidence" value="ECO:0000318"/>
    <property type="project" value="GO_Central"/>
</dbReference>
<dbReference type="GO" id="GO:0000162">
    <property type="term" value="P:L-tryptophan biosynthetic process"/>
    <property type="evidence" value="ECO:0000318"/>
    <property type="project" value="GO_Central"/>
</dbReference>
<dbReference type="CDD" id="cd04724">
    <property type="entry name" value="Tryptophan_synthase_alpha"/>
    <property type="match status" value="1"/>
</dbReference>
<dbReference type="Gene3D" id="3.20.20.70">
    <property type="entry name" value="Aldolase class I"/>
    <property type="match status" value="1"/>
</dbReference>
<dbReference type="InterPro" id="IPR013785">
    <property type="entry name" value="Aldolase_TIM"/>
</dbReference>
<dbReference type="InterPro" id="IPR011060">
    <property type="entry name" value="RibuloseP-bd_barrel"/>
</dbReference>
<dbReference type="InterPro" id="IPR018204">
    <property type="entry name" value="Trp_synthase_alpha_AS"/>
</dbReference>
<dbReference type="InterPro" id="IPR002028">
    <property type="entry name" value="Trp_synthase_suA"/>
</dbReference>
<dbReference type="NCBIfam" id="TIGR00262">
    <property type="entry name" value="trpA"/>
    <property type="match status" value="1"/>
</dbReference>
<dbReference type="PANTHER" id="PTHR43406:SF1">
    <property type="entry name" value="TRYPTOPHAN SYNTHASE ALPHA CHAIN, CHLOROPLASTIC"/>
    <property type="match status" value="1"/>
</dbReference>
<dbReference type="PANTHER" id="PTHR43406">
    <property type="entry name" value="TRYPTOPHAN SYNTHASE, ALPHA CHAIN"/>
    <property type="match status" value="1"/>
</dbReference>
<dbReference type="Pfam" id="PF00290">
    <property type="entry name" value="Trp_syntA"/>
    <property type="match status" value="1"/>
</dbReference>
<dbReference type="SUPFAM" id="SSF51366">
    <property type="entry name" value="Ribulose-phoshate binding barrel"/>
    <property type="match status" value="1"/>
</dbReference>
<dbReference type="PROSITE" id="PS00167">
    <property type="entry name" value="TRP_SYNTHASE_ALPHA"/>
    <property type="match status" value="1"/>
</dbReference>
<comment type="function">
    <text evidence="1">The alpha subunit is responsible for the aldol cleavage of indoleglycerol phosphate to indole and glyceraldehyde 3-phosphate.</text>
</comment>
<comment type="catalytic activity">
    <reaction>
        <text>(1S,2R)-1-C-(indol-3-yl)glycerol 3-phosphate + L-serine = D-glyceraldehyde 3-phosphate + L-tryptophan + H2O</text>
        <dbReference type="Rhea" id="RHEA:10532"/>
        <dbReference type="ChEBI" id="CHEBI:15377"/>
        <dbReference type="ChEBI" id="CHEBI:33384"/>
        <dbReference type="ChEBI" id="CHEBI:57912"/>
        <dbReference type="ChEBI" id="CHEBI:58866"/>
        <dbReference type="ChEBI" id="CHEBI:59776"/>
        <dbReference type="EC" id="4.2.1.20"/>
    </reaction>
</comment>
<comment type="pathway">
    <text>Amino-acid biosynthesis; L-tryptophan biosynthesis; L-tryptophan from chorismate: step 5/5.</text>
</comment>
<comment type="subunit">
    <text evidence="1">Tetramer of two alpha and two beta chains.</text>
</comment>
<comment type="similarity">
    <text evidence="3">Belongs to the TrpA family.</text>
</comment>
<comment type="caution">
    <text evidence="3">This TrpA is highly divergent compared to other bacterial TrpA. As C.trachomatis seems to have lost part of the trp biosynthetic operon, it is possible that this protein is not active.</text>
</comment>
<keyword id="KW-0002">3D-structure</keyword>
<keyword id="KW-0028">Amino-acid biosynthesis</keyword>
<keyword id="KW-0057">Aromatic amino acid biosynthesis</keyword>
<keyword id="KW-0456">Lyase</keyword>
<keyword id="KW-1185">Reference proteome</keyword>
<keyword id="KW-0822">Tryptophan biosynthesis</keyword>
<feature type="chain" id="PRO_0000098768" description="Tryptophan synthase alpha chain">
    <location>
        <begin position="1"/>
        <end position="253"/>
    </location>
</feature>
<feature type="active site" description="Proton acceptor" evidence="2">
    <location>
        <position position="44"/>
    </location>
</feature>
<feature type="active site" description="Proton acceptor" evidence="2">
    <location>
        <position position="55"/>
    </location>
</feature>
<feature type="helix" evidence="4">
    <location>
        <begin position="4"/>
        <end position="7"/>
    </location>
</feature>
<feature type="strand" evidence="4">
    <location>
        <begin position="10"/>
        <end position="19"/>
    </location>
</feature>
<feature type="turn" evidence="4">
    <location>
        <begin position="20"/>
        <end position="23"/>
    </location>
</feature>
<feature type="helix" evidence="4">
    <location>
        <begin position="25"/>
        <end position="37"/>
    </location>
</feature>
<feature type="strand" evidence="4">
    <location>
        <begin position="41"/>
        <end position="46"/>
    </location>
</feature>
<feature type="helix" evidence="4">
    <location>
        <begin position="57"/>
        <end position="68"/>
    </location>
</feature>
<feature type="helix" evidence="4">
    <location>
        <begin position="73"/>
        <end position="84"/>
    </location>
</feature>
<feature type="strand" evidence="4">
    <location>
        <begin position="88"/>
        <end position="90"/>
    </location>
</feature>
<feature type="strand" evidence="4">
    <location>
        <begin position="92"/>
        <end position="96"/>
    </location>
</feature>
<feature type="helix" evidence="4">
    <location>
        <begin position="98"/>
        <end position="102"/>
    </location>
</feature>
<feature type="helix" evidence="4">
    <location>
        <begin position="106"/>
        <end position="115"/>
    </location>
</feature>
<feature type="strand" evidence="4">
    <location>
        <begin position="119"/>
        <end position="122"/>
    </location>
</feature>
<feature type="strand" evidence="4">
    <location>
        <begin position="129"/>
        <end position="132"/>
    </location>
</feature>
<feature type="helix" evidence="4">
    <location>
        <begin position="136"/>
        <end position="144"/>
    </location>
</feature>
<feature type="strand" evidence="4">
    <location>
        <begin position="151"/>
        <end position="153"/>
    </location>
</feature>
<feature type="helix" evidence="4">
    <location>
        <begin position="158"/>
        <end position="167"/>
    </location>
</feature>
<feature type="strand" evidence="4">
    <location>
        <begin position="172"/>
        <end position="175"/>
    </location>
</feature>
<feature type="helix" evidence="4">
    <location>
        <begin position="187"/>
        <end position="198"/>
    </location>
</feature>
<feature type="strand" evidence="4">
    <location>
        <begin position="202"/>
        <end position="207"/>
    </location>
</feature>
<feature type="helix" evidence="4">
    <location>
        <begin position="211"/>
        <end position="218"/>
    </location>
</feature>
<feature type="strand" evidence="4">
    <location>
        <begin position="221"/>
        <end position="226"/>
    </location>
</feature>
<feature type="helix" evidence="4">
    <location>
        <begin position="229"/>
        <end position="236"/>
    </location>
</feature>
<feature type="helix" evidence="4">
    <location>
        <begin position="241"/>
        <end position="250"/>
    </location>
</feature>
<accession>O84173</accession>
<evidence type="ECO:0000250" key="1"/>
<evidence type="ECO:0000255" key="2">
    <source>
        <dbReference type="PROSITE-ProRule" id="PRU10120"/>
    </source>
</evidence>
<evidence type="ECO:0000305" key="3"/>
<evidence type="ECO:0007829" key="4">
    <source>
        <dbReference type="PDB" id="6V82"/>
    </source>
</evidence>
<reference key="1">
    <citation type="journal article" date="1998" name="Science">
        <title>Genome sequence of an obligate intracellular pathogen of humans: Chlamydia trachomatis.</title>
        <authorList>
            <person name="Stephens R.S."/>
            <person name="Kalman S."/>
            <person name="Lammel C.J."/>
            <person name="Fan J."/>
            <person name="Marathe R."/>
            <person name="Aravind L."/>
            <person name="Mitchell W.P."/>
            <person name="Olinger L."/>
            <person name="Tatusov R.L."/>
            <person name="Zhao Q."/>
            <person name="Koonin E.V."/>
            <person name="Davis R.W."/>
        </authorList>
    </citation>
    <scope>NUCLEOTIDE SEQUENCE [LARGE SCALE GENOMIC DNA]</scope>
    <source>
        <strain>ATCC VR-885 / DSM 19411 / UW-3/Cx</strain>
    </source>
</reference>
<organism>
    <name type="scientific">Chlamydia trachomatis serovar D (strain ATCC VR-885 / DSM 19411 / UW-3/Cx)</name>
    <dbReference type="NCBI Taxonomy" id="272561"/>
    <lineage>
        <taxon>Bacteria</taxon>
        <taxon>Pseudomonadati</taxon>
        <taxon>Chlamydiota</taxon>
        <taxon>Chlamydiia</taxon>
        <taxon>Chlamydiales</taxon>
        <taxon>Chlamydiaceae</taxon>
        <taxon>Chlamydia/Chlamydophila group</taxon>
        <taxon>Chlamydia</taxon>
    </lineage>
</organism>
<gene>
    <name type="primary">trpA</name>
    <name type="ordered locus">CT_171</name>
</gene>